<dbReference type="EC" id="3.4.21.88" evidence="1"/>
<dbReference type="EMBL" id="CP001139">
    <property type="protein sequence ID" value="ACH67333.1"/>
    <property type="molecule type" value="Genomic_DNA"/>
</dbReference>
<dbReference type="RefSeq" id="WP_012534359.1">
    <property type="nucleotide sequence ID" value="NC_011184.1"/>
</dbReference>
<dbReference type="SMR" id="B5FCB2"/>
<dbReference type="MEROPS" id="S24.001"/>
<dbReference type="KEGG" id="vfm:VFMJ11_2566"/>
<dbReference type="HOGENOM" id="CLU_066192_45_3_6"/>
<dbReference type="Proteomes" id="UP000001857">
    <property type="component" value="Chromosome I"/>
</dbReference>
<dbReference type="GO" id="GO:0003677">
    <property type="term" value="F:DNA binding"/>
    <property type="evidence" value="ECO:0007669"/>
    <property type="project" value="UniProtKB-UniRule"/>
</dbReference>
<dbReference type="GO" id="GO:0004252">
    <property type="term" value="F:serine-type endopeptidase activity"/>
    <property type="evidence" value="ECO:0007669"/>
    <property type="project" value="UniProtKB-UniRule"/>
</dbReference>
<dbReference type="GO" id="GO:0006281">
    <property type="term" value="P:DNA repair"/>
    <property type="evidence" value="ECO:0007669"/>
    <property type="project" value="UniProtKB-UniRule"/>
</dbReference>
<dbReference type="GO" id="GO:0006260">
    <property type="term" value="P:DNA replication"/>
    <property type="evidence" value="ECO:0007669"/>
    <property type="project" value="UniProtKB-UniRule"/>
</dbReference>
<dbReference type="GO" id="GO:0045892">
    <property type="term" value="P:negative regulation of DNA-templated transcription"/>
    <property type="evidence" value="ECO:0007669"/>
    <property type="project" value="UniProtKB-UniRule"/>
</dbReference>
<dbReference type="GO" id="GO:0006508">
    <property type="term" value="P:proteolysis"/>
    <property type="evidence" value="ECO:0007669"/>
    <property type="project" value="InterPro"/>
</dbReference>
<dbReference type="GO" id="GO:0009432">
    <property type="term" value="P:SOS response"/>
    <property type="evidence" value="ECO:0007669"/>
    <property type="project" value="UniProtKB-UniRule"/>
</dbReference>
<dbReference type="CDD" id="cd06529">
    <property type="entry name" value="S24_LexA-like"/>
    <property type="match status" value="1"/>
</dbReference>
<dbReference type="FunFam" id="1.10.10.10:FF:000009">
    <property type="entry name" value="LexA repressor"/>
    <property type="match status" value="1"/>
</dbReference>
<dbReference type="FunFam" id="2.10.109.10:FF:000001">
    <property type="entry name" value="LexA repressor"/>
    <property type="match status" value="1"/>
</dbReference>
<dbReference type="Gene3D" id="2.10.109.10">
    <property type="entry name" value="Umud Fragment, subunit A"/>
    <property type="match status" value="1"/>
</dbReference>
<dbReference type="Gene3D" id="1.10.10.10">
    <property type="entry name" value="Winged helix-like DNA-binding domain superfamily/Winged helix DNA-binding domain"/>
    <property type="match status" value="1"/>
</dbReference>
<dbReference type="HAMAP" id="MF_00015">
    <property type="entry name" value="LexA"/>
    <property type="match status" value="1"/>
</dbReference>
<dbReference type="InterPro" id="IPR006200">
    <property type="entry name" value="LexA"/>
</dbReference>
<dbReference type="InterPro" id="IPR039418">
    <property type="entry name" value="LexA-like"/>
</dbReference>
<dbReference type="InterPro" id="IPR036286">
    <property type="entry name" value="LexA/Signal_pep-like_sf"/>
</dbReference>
<dbReference type="InterPro" id="IPR006199">
    <property type="entry name" value="LexA_DNA-bd_dom"/>
</dbReference>
<dbReference type="InterPro" id="IPR050077">
    <property type="entry name" value="LexA_repressor"/>
</dbReference>
<dbReference type="InterPro" id="IPR006197">
    <property type="entry name" value="Peptidase_S24_LexA"/>
</dbReference>
<dbReference type="InterPro" id="IPR015927">
    <property type="entry name" value="Peptidase_S24_S26A/B/C"/>
</dbReference>
<dbReference type="InterPro" id="IPR036388">
    <property type="entry name" value="WH-like_DNA-bd_sf"/>
</dbReference>
<dbReference type="InterPro" id="IPR036390">
    <property type="entry name" value="WH_DNA-bd_sf"/>
</dbReference>
<dbReference type="NCBIfam" id="TIGR00498">
    <property type="entry name" value="lexA"/>
    <property type="match status" value="1"/>
</dbReference>
<dbReference type="PANTHER" id="PTHR33516">
    <property type="entry name" value="LEXA REPRESSOR"/>
    <property type="match status" value="1"/>
</dbReference>
<dbReference type="PANTHER" id="PTHR33516:SF2">
    <property type="entry name" value="LEXA REPRESSOR-RELATED"/>
    <property type="match status" value="1"/>
</dbReference>
<dbReference type="Pfam" id="PF01726">
    <property type="entry name" value="LexA_DNA_bind"/>
    <property type="match status" value="1"/>
</dbReference>
<dbReference type="Pfam" id="PF00717">
    <property type="entry name" value="Peptidase_S24"/>
    <property type="match status" value="1"/>
</dbReference>
<dbReference type="PRINTS" id="PR00726">
    <property type="entry name" value="LEXASERPTASE"/>
</dbReference>
<dbReference type="SUPFAM" id="SSF51306">
    <property type="entry name" value="LexA/Signal peptidase"/>
    <property type="match status" value="1"/>
</dbReference>
<dbReference type="SUPFAM" id="SSF46785">
    <property type="entry name" value="Winged helix' DNA-binding domain"/>
    <property type="match status" value="1"/>
</dbReference>
<comment type="function">
    <text evidence="1">Represses a number of genes involved in the response to DNA damage (SOS response), including recA and lexA. In the presence of single-stranded DNA, RecA interacts with LexA causing an autocatalytic cleavage which disrupts the DNA-binding part of LexA, leading to derepression of the SOS regulon and eventually DNA repair.</text>
</comment>
<comment type="catalytic activity">
    <reaction evidence="1">
        <text>Hydrolysis of Ala-|-Gly bond in repressor LexA.</text>
        <dbReference type="EC" id="3.4.21.88"/>
    </reaction>
</comment>
<comment type="subunit">
    <text evidence="1">Homodimer.</text>
</comment>
<comment type="similarity">
    <text evidence="1">Belongs to the peptidase S24 family.</text>
</comment>
<keyword id="KW-0068">Autocatalytic cleavage</keyword>
<keyword id="KW-0227">DNA damage</keyword>
<keyword id="KW-0234">DNA repair</keyword>
<keyword id="KW-0235">DNA replication</keyword>
<keyword id="KW-0238">DNA-binding</keyword>
<keyword id="KW-0378">Hydrolase</keyword>
<keyword id="KW-0678">Repressor</keyword>
<keyword id="KW-0742">SOS response</keyword>
<keyword id="KW-0804">Transcription</keyword>
<keyword id="KW-0805">Transcription regulation</keyword>
<evidence type="ECO:0000255" key="1">
    <source>
        <dbReference type="HAMAP-Rule" id="MF_00015"/>
    </source>
</evidence>
<feature type="chain" id="PRO_1000089602" description="LexA repressor">
    <location>
        <begin position="1"/>
        <end position="208"/>
    </location>
</feature>
<feature type="DNA-binding region" description="H-T-H motif" evidence="1">
    <location>
        <begin position="28"/>
        <end position="48"/>
    </location>
</feature>
<feature type="active site" description="For autocatalytic cleavage activity" evidence="1">
    <location>
        <position position="125"/>
    </location>
</feature>
<feature type="active site" description="For autocatalytic cleavage activity" evidence="1">
    <location>
        <position position="162"/>
    </location>
</feature>
<feature type="site" description="Cleavage; by autolysis" evidence="1">
    <location>
        <begin position="90"/>
        <end position="91"/>
    </location>
</feature>
<organism>
    <name type="scientific">Aliivibrio fischeri (strain MJ11)</name>
    <name type="common">Vibrio fischeri</name>
    <dbReference type="NCBI Taxonomy" id="388396"/>
    <lineage>
        <taxon>Bacteria</taxon>
        <taxon>Pseudomonadati</taxon>
        <taxon>Pseudomonadota</taxon>
        <taxon>Gammaproteobacteria</taxon>
        <taxon>Vibrionales</taxon>
        <taxon>Vibrionaceae</taxon>
        <taxon>Aliivibrio</taxon>
    </lineage>
</organism>
<proteinExistence type="inferred from homology"/>
<gene>
    <name evidence="1" type="primary">lexA</name>
    <name type="ordered locus">VFMJ11_2566</name>
</gene>
<accession>B5FCB2</accession>
<reference key="1">
    <citation type="submission" date="2008-08" db="EMBL/GenBank/DDBJ databases">
        <title>Complete sequence of Vibrio fischeri strain MJ11.</title>
        <authorList>
            <person name="Mandel M.J."/>
            <person name="Stabb E.V."/>
            <person name="Ruby E.G."/>
            <person name="Ferriera S."/>
            <person name="Johnson J."/>
            <person name="Kravitz S."/>
            <person name="Beeson K."/>
            <person name="Sutton G."/>
            <person name="Rogers Y.-H."/>
            <person name="Friedman R."/>
            <person name="Frazier M."/>
            <person name="Venter J.C."/>
        </authorList>
    </citation>
    <scope>NUCLEOTIDE SEQUENCE [LARGE SCALE GENOMIC DNA]</scope>
    <source>
        <strain>MJ11</strain>
    </source>
</reference>
<protein>
    <recommendedName>
        <fullName evidence="1">LexA repressor</fullName>
        <ecNumber evidence="1">3.4.21.88</ecNumber>
    </recommendedName>
</protein>
<sequence>MKPLTARQQEVFDLIKAKIDDTGMPPTRAEIARELGFRSANAAEEHLKALARKQVIEIIPGASRGIRILLQDADDHDEELGVPLIGQVAAGEPILAQEHVESHYKVDPGMFKPQADFLLRVNGESMKDIGIMDGDLLAVHKTQDVRDGQVVVARVDDDVTVKRLERKGSMVFLHAENEEFSPIEVDLTSQSLSIEGLAVGVIRSTTWM</sequence>
<name>LEXA_ALIFM</name>